<proteinExistence type="inferred from homology"/>
<dbReference type="EC" id="4.1.1.32" evidence="1"/>
<dbReference type="EMBL" id="Z95398">
    <property type="protein sequence ID" value="CAB08805.1"/>
    <property type="molecule type" value="Genomic_DNA"/>
</dbReference>
<dbReference type="EMBL" id="AL583926">
    <property type="protein sequence ID" value="CAC32156.1"/>
    <property type="molecule type" value="Genomic_DNA"/>
</dbReference>
<dbReference type="PIR" id="F87237">
    <property type="entry name" value="F87237"/>
</dbReference>
<dbReference type="RefSeq" id="NP_302681.1">
    <property type="nucleotide sequence ID" value="NC_002677.1"/>
</dbReference>
<dbReference type="RefSeq" id="WP_010909000.1">
    <property type="nucleotide sequence ID" value="NC_002677.1"/>
</dbReference>
<dbReference type="SMR" id="O06084"/>
<dbReference type="STRING" id="272631.gene:17576490"/>
<dbReference type="KEGG" id="mle:ML2624"/>
<dbReference type="PATRIC" id="fig|272631.5.peg.5030"/>
<dbReference type="Leproma" id="ML2624"/>
<dbReference type="eggNOG" id="COG1274">
    <property type="taxonomic scope" value="Bacteria"/>
</dbReference>
<dbReference type="HOGENOM" id="CLU_028872_1_1_11"/>
<dbReference type="OrthoDB" id="9758871at2"/>
<dbReference type="UniPathway" id="UPA00138"/>
<dbReference type="Proteomes" id="UP000000806">
    <property type="component" value="Chromosome"/>
</dbReference>
<dbReference type="GO" id="GO:0005829">
    <property type="term" value="C:cytosol"/>
    <property type="evidence" value="ECO:0007669"/>
    <property type="project" value="TreeGrafter"/>
</dbReference>
<dbReference type="GO" id="GO:0005525">
    <property type="term" value="F:GTP binding"/>
    <property type="evidence" value="ECO:0007669"/>
    <property type="project" value="UniProtKB-UniRule"/>
</dbReference>
<dbReference type="GO" id="GO:0030145">
    <property type="term" value="F:manganese ion binding"/>
    <property type="evidence" value="ECO:0007669"/>
    <property type="project" value="UniProtKB-UniRule"/>
</dbReference>
<dbReference type="GO" id="GO:0004613">
    <property type="term" value="F:phosphoenolpyruvate carboxykinase (GTP) activity"/>
    <property type="evidence" value="ECO:0007669"/>
    <property type="project" value="UniProtKB-UniRule"/>
</dbReference>
<dbReference type="GO" id="GO:0071333">
    <property type="term" value="P:cellular response to glucose stimulus"/>
    <property type="evidence" value="ECO:0007669"/>
    <property type="project" value="TreeGrafter"/>
</dbReference>
<dbReference type="GO" id="GO:0006094">
    <property type="term" value="P:gluconeogenesis"/>
    <property type="evidence" value="ECO:0007669"/>
    <property type="project" value="UniProtKB-UniRule"/>
</dbReference>
<dbReference type="GO" id="GO:0046327">
    <property type="term" value="P:glycerol biosynthetic process from pyruvate"/>
    <property type="evidence" value="ECO:0007669"/>
    <property type="project" value="TreeGrafter"/>
</dbReference>
<dbReference type="GO" id="GO:0006107">
    <property type="term" value="P:oxaloacetate metabolic process"/>
    <property type="evidence" value="ECO:0007669"/>
    <property type="project" value="TreeGrafter"/>
</dbReference>
<dbReference type="GO" id="GO:0019543">
    <property type="term" value="P:propionate catabolic process"/>
    <property type="evidence" value="ECO:0007669"/>
    <property type="project" value="TreeGrafter"/>
</dbReference>
<dbReference type="GO" id="GO:0033993">
    <property type="term" value="P:response to lipid"/>
    <property type="evidence" value="ECO:0007669"/>
    <property type="project" value="TreeGrafter"/>
</dbReference>
<dbReference type="GO" id="GO:0042594">
    <property type="term" value="P:response to starvation"/>
    <property type="evidence" value="ECO:0007669"/>
    <property type="project" value="TreeGrafter"/>
</dbReference>
<dbReference type="CDD" id="cd00819">
    <property type="entry name" value="PEPCK_GTP"/>
    <property type="match status" value="1"/>
</dbReference>
<dbReference type="FunFam" id="3.40.449.10:FF:000005">
    <property type="entry name" value="Phosphoenolpyruvate carboxykinase [GTP]"/>
    <property type="match status" value="1"/>
</dbReference>
<dbReference type="Gene3D" id="3.90.228.20">
    <property type="match status" value="1"/>
</dbReference>
<dbReference type="Gene3D" id="3.40.449.10">
    <property type="entry name" value="Phosphoenolpyruvate Carboxykinase, domain 1"/>
    <property type="match status" value="1"/>
</dbReference>
<dbReference type="Gene3D" id="2.170.8.10">
    <property type="entry name" value="Phosphoenolpyruvate Carboxykinase, domain 2"/>
    <property type="match status" value="1"/>
</dbReference>
<dbReference type="HAMAP" id="MF_00452">
    <property type="entry name" value="PEPCK_GTP"/>
    <property type="match status" value="1"/>
</dbReference>
<dbReference type="InterPro" id="IPR018091">
    <property type="entry name" value="PEP_carboxykin_GTP_CS"/>
</dbReference>
<dbReference type="InterPro" id="IPR013035">
    <property type="entry name" value="PEP_carboxykinase_C"/>
</dbReference>
<dbReference type="InterPro" id="IPR008209">
    <property type="entry name" value="PEP_carboxykinase_GTP"/>
</dbReference>
<dbReference type="InterPro" id="IPR035077">
    <property type="entry name" value="PEP_carboxykinase_GTP_C"/>
</dbReference>
<dbReference type="InterPro" id="IPR035078">
    <property type="entry name" value="PEP_carboxykinase_GTP_N"/>
</dbReference>
<dbReference type="InterPro" id="IPR008210">
    <property type="entry name" value="PEP_carboxykinase_N"/>
</dbReference>
<dbReference type="NCBIfam" id="NF003253">
    <property type="entry name" value="PRK04210.1"/>
    <property type="match status" value="1"/>
</dbReference>
<dbReference type="PANTHER" id="PTHR11561">
    <property type="entry name" value="PHOSPHOENOLPYRUVATE CARBOXYKINASE"/>
    <property type="match status" value="1"/>
</dbReference>
<dbReference type="PANTHER" id="PTHR11561:SF0">
    <property type="entry name" value="PHOSPHOENOLPYRUVATE CARBOXYKINASE [GTP]-RELATED"/>
    <property type="match status" value="1"/>
</dbReference>
<dbReference type="Pfam" id="PF00821">
    <property type="entry name" value="PEPCK_GTP"/>
    <property type="match status" value="1"/>
</dbReference>
<dbReference type="Pfam" id="PF17297">
    <property type="entry name" value="PEPCK_N"/>
    <property type="match status" value="1"/>
</dbReference>
<dbReference type="PIRSF" id="PIRSF001348">
    <property type="entry name" value="PEP_carboxykinase_GTP"/>
    <property type="match status" value="1"/>
</dbReference>
<dbReference type="SUPFAM" id="SSF68923">
    <property type="entry name" value="PEP carboxykinase N-terminal domain"/>
    <property type="match status" value="1"/>
</dbReference>
<dbReference type="SUPFAM" id="SSF53795">
    <property type="entry name" value="PEP carboxykinase-like"/>
    <property type="match status" value="1"/>
</dbReference>
<dbReference type="PROSITE" id="PS00505">
    <property type="entry name" value="PEPCK_GTP"/>
    <property type="match status" value="1"/>
</dbReference>
<evidence type="ECO:0000255" key="1">
    <source>
        <dbReference type="HAMAP-Rule" id="MF_00452"/>
    </source>
</evidence>
<comment type="function">
    <text evidence="1">Catalyzes the conversion of oxaloacetate (OAA) to phosphoenolpyruvate (PEP), the rate-limiting step in the metabolic pathway that produces glucose from lactate and other precursors derived from the citric acid cycle.</text>
</comment>
<comment type="catalytic activity">
    <reaction evidence="1">
        <text>oxaloacetate + GTP = phosphoenolpyruvate + GDP + CO2</text>
        <dbReference type="Rhea" id="RHEA:10388"/>
        <dbReference type="ChEBI" id="CHEBI:16452"/>
        <dbReference type="ChEBI" id="CHEBI:16526"/>
        <dbReference type="ChEBI" id="CHEBI:37565"/>
        <dbReference type="ChEBI" id="CHEBI:58189"/>
        <dbReference type="ChEBI" id="CHEBI:58702"/>
        <dbReference type="EC" id="4.1.1.32"/>
    </reaction>
</comment>
<comment type="cofactor">
    <cofactor evidence="1">
        <name>Mn(2+)</name>
        <dbReference type="ChEBI" id="CHEBI:29035"/>
    </cofactor>
    <text evidence="1">Binds 1 Mn(2+) ion per subunit.</text>
</comment>
<comment type="pathway">
    <text evidence="1">Carbohydrate biosynthesis; gluconeogenesis.</text>
</comment>
<comment type="subunit">
    <text evidence="1">Monomer.</text>
</comment>
<comment type="subcellular location">
    <subcellularLocation>
        <location evidence="1">Cytoplasm</location>
    </subcellularLocation>
</comment>
<comment type="similarity">
    <text evidence="1">Belongs to the phosphoenolpyruvate carboxykinase [GTP] family.</text>
</comment>
<organism>
    <name type="scientific">Mycobacterium leprae (strain TN)</name>
    <dbReference type="NCBI Taxonomy" id="272631"/>
    <lineage>
        <taxon>Bacteria</taxon>
        <taxon>Bacillati</taxon>
        <taxon>Actinomycetota</taxon>
        <taxon>Actinomycetes</taxon>
        <taxon>Mycobacteriales</taxon>
        <taxon>Mycobacteriaceae</taxon>
        <taxon>Mycobacterium</taxon>
    </lineage>
</organism>
<keyword id="KW-0963">Cytoplasm</keyword>
<keyword id="KW-0210">Decarboxylase</keyword>
<keyword id="KW-0312">Gluconeogenesis</keyword>
<keyword id="KW-0342">GTP-binding</keyword>
<keyword id="KW-0456">Lyase</keyword>
<keyword id="KW-0464">Manganese</keyword>
<keyword id="KW-0479">Metal-binding</keyword>
<keyword id="KW-0547">Nucleotide-binding</keyword>
<keyword id="KW-1185">Reference proteome</keyword>
<reference key="1">
    <citation type="journal article" date="2001" name="Nature">
        <title>Massive gene decay in the leprosy bacillus.</title>
        <authorList>
            <person name="Cole S.T."/>
            <person name="Eiglmeier K."/>
            <person name="Parkhill J."/>
            <person name="James K.D."/>
            <person name="Thomson N.R."/>
            <person name="Wheeler P.R."/>
            <person name="Honore N."/>
            <person name="Garnier T."/>
            <person name="Churcher C.M."/>
            <person name="Harris D.E."/>
            <person name="Mungall K.L."/>
            <person name="Basham D."/>
            <person name="Brown D."/>
            <person name="Chillingworth T."/>
            <person name="Connor R."/>
            <person name="Davies R.M."/>
            <person name="Devlin K."/>
            <person name="Duthoy S."/>
            <person name="Feltwell T."/>
            <person name="Fraser A."/>
            <person name="Hamlin N."/>
            <person name="Holroyd S."/>
            <person name="Hornsby T."/>
            <person name="Jagels K."/>
            <person name="Lacroix C."/>
            <person name="Maclean J."/>
            <person name="Moule S."/>
            <person name="Murphy L.D."/>
            <person name="Oliver K."/>
            <person name="Quail M.A."/>
            <person name="Rajandream M.A."/>
            <person name="Rutherford K.M."/>
            <person name="Rutter S."/>
            <person name="Seeger K."/>
            <person name="Simon S."/>
            <person name="Simmonds M."/>
            <person name="Skelton J."/>
            <person name="Squares R."/>
            <person name="Squares S."/>
            <person name="Stevens K."/>
            <person name="Taylor K."/>
            <person name="Whitehead S."/>
            <person name="Woodward J.R."/>
            <person name="Barrell B.G."/>
        </authorList>
    </citation>
    <scope>NUCLEOTIDE SEQUENCE [LARGE SCALE GENOMIC DNA]</scope>
    <source>
        <strain>TN</strain>
    </source>
</reference>
<name>PCKG_MYCLE</name>
<sequence length="609" mass="67732">MTSATIPGLDTAPTNHQKLLSWLEEVAELTHPAQVVFADGSDEEWQQLTERLVAAGTFKKLNDEKHPNSYLALSDPSDVARVESRTFICSEREIDAGPTNNWMDPAEMRSTMTELYRGCMRGRTMWVVPFCMGPPGAEDPKLGVEITDSEYVVASMKVMTRMGTSALEKIGDDGFFVKALHSVGAPLQPGQQDMPWPCNETKYITHFPETREIWSYGSGYGGNALLGKKCYSLRIASAMAHDEGWLAEHMLILKLISPENKAYYFAAAFPSACGKTNLAMLQPTIPGWRAETLGDDIAWMRFGKDGRLYAVNPEFGFFGVAPGTNWKSNPNAMRTIAAGNTVFTNVALTDDNDVWWEGLEGEPAHLIDWKGNDWYAGKTETPAAHSNSRYCTPMSQCPILAPEWDDPRGVPISVILFGARRKTTVPLVTQARNWQHGVFMGATMGSEQTAAAEGKVGTVRRDPMAMLPFMGYHVGDYFQHWIDLGKHSDESNLPKVFFVNWFRRGEGGKFLWPGFGENSRVLKWIVDRIEHKAGGQDTLIGIVPTATDLDLDGLDISSDDVAKALAVDPAEWRNELPLIEEWFEFVGDKLPSGMQDEFEALKQRLAKED</sequence>
<gene>
    <name evidence="1" type="primary">pckG</name>
    <name type="synonym">pckA</name>
    <name type="ordered locus">ML2624</name>
    <name type="ORF">MLCL622.21</name>
</gene>
<protein>
    <recommendedName>
        <fullName evidence="1">Phosphoenolpyruvate carboxykinase [GTP]</fullName>
        <shortName evidence="1">PEP carboxykinase</shortName>
        <shortName evidence="1">PEPCK</shortName>
        <ecNumber evidence="1">4.1.1.32</ecNumber>
    </recommendedName>
</protein>
<feature type="chain" id="PRO_0000103608" description="Phosphoenolpyruvate carboxykinase [GTP]">
    <location>
        <begin position="1"/>
        <end position="609"/>
    </location>
</feature>
<feature type="active site" evidence="1">
    <location>
        <position position="273"/>
    </location>
</feature>
<feature type="binding site" evidence="1">
    <location>
        <position position="81"/>
    </location>
    <ligand>
        <name>substrate</name>
    </ligand>
</feature>
<feature type="binding site" evidence="1">
    <location>
        <begin position="220"/>
        <end position="222"/>
    </location>
    <ligand>
        <name>substrate</name>
    </ligand>
</feature>
<feature type="binding site" evidence="1">
    <location>
        <position position="229"/>
    </location>
    <ligand>
        <name>Mn(2+)</name>
        <dbReference type="ChEBI" id="CHEBI:29035"/>
    </ligand>
</feature>
<feature type="binding site" evidence="1">
    <location>
        <position position="249"/>
    </location>
    <ligand>
        <name>Mn(2+)</name>
        <dbReference type="ChEBI" id="CHEBI:29035"/>
    </ligand>
</feature>
<feature type="binding site" evidence="1">
    <location>
        <position position="271"/>
    </location>
    <ligand>
        <name>substrate</name>
    </ligand>
</feature>
<feature type="binding site" evidence="1">
    <location>
        <begin position="272"/>
        <end position="277"/>
    </location>
    <ligand>
        <name>GTP</name>
        <dbReference type="ChEBI" id="CHEBI:37565"/>
    </ligand>
</feature>
<feature type="binding site" evidence="1">
    <location>
        <position position="296"/>
    </location>
    <ligand>
        <name>Mn(2+)</name>
        <dbReference type="ChEBI" id="CHEBI:29035"/>
    </ligand>
</feature>
<feature type="binding site" evidence="1">
    <location>
        <begin position="387"/>
        <end position="389"/>
    </location>
    <ligand>
        <name>substrate</name>
    </ligand>
</feature>
<feature type="binding site" evidence="1">
    <location>
        <position position="389"/>
    </location>
    <ligand>
        <name>GTP</name>
        <dbReference type="ChEBI" id="CHEBI:37565"/>
    </ligand>
</feature>
<feature type="binding site" evidence="1">
    <location>
        <position position="420"/>
    </location>
    <ligand>
        <name>GTP</name>
        <dbReference type="ChEBI" id="CHEBI:37565"/>
    </ligand>
</feature>
<feature type="binding site" evidence="1">
    <location>
        <begin position="515"/>
        <end position="518"/>
    </location>
    <ligand>
        <name>GTP</name>
        <dbReference type="ChEBI" id="CHEBI:37565"/>
    </ligand>
</feature>
<accession>O06084</accession>